<keyword id="KW-0028">Amino-acid biosynthesis</keyword>
<keyword id="KW-0368">Histidine biosynthesis</keyword>
<keyword id="KW-0378">Hydrolase</keyword>
<keyword id="KW-0486">Methionine biosynthesis</keyword>
<keyword id="KW-0511">Multifunctional enzyme</keyword>
<keyword id="KW-0521">NADP</keyword>
<keyword id="KW-0554">One-carbon metabolism</keyword>
<keyword id="KW-0560">Oxidoreductase</keyword>
<keyword id="KW-0658">Purine biosynthesis</keyword>
<keyword id="KW-1185">Reference proteome</keyword>
<protein>
    <recommendedName>
        <fullName evidence="1">Bifunctional protein FolD</fullName>
    </recommendedName>
    <domain>
        <recommendedName>
            <fullName evidence="1">Methylenetetrahydrofolate dehydrogenase</fullName>
            <ecNumber evidence="1">1.5.1.5</ecNumber>
        </recommendedName>
    </domain>
    <domain>
        <recommendedName>
            <fullName evidence="1">Methenyltetrahydrofolate cyclohydrolase</fullName>
            <ecNumber evidence="1">3.5.4.9</ecNumber>
        </recommendedName>
    </domain>
</protein>
<gene>
    <name evidence="1" type="primary">folD</name>
    <name type="ordered locus">HAPS_1144</name>
</gene>
<dbReference type="EC" id="1.5.1.5" evidence="1"/>
<dbReference type="EC" id="3.5.4.9" evidence="1"/>
<dbReference type="EMBL" id="CP001321">
    <property type="protein sequence ID" value="ACL32757.1"/>
    <property type="molecule type" value="Genomic_DNA"/>
</dbReference>
<dbReference type="RefSeq" id="WP_010786207.1">
    <property type="nucleotide sequence ID" value="NC_011852.1"/>
</dbReference>
<dbReference type="SMR" id="B8F605"/>
<dbReference type="STRING" id="557723.HAPS_1144"/>
<dbReference type="GeneID" id="66618104"/>
<dbReference type="KEGG" id="hap:HAPS_1144"/>
<dbReference type="HOGENOM" id="CLU_034045_2_1_6"/>
<dbReference type="UniPathway" id="UPA00193"/>
<dbReference type="Proteomes" id="UP000006743">
    <property type="component" value="Chromosome"/>
</dbReference>
<dbReference type="GO" id="GO:0005829">
    <property type="term" value="C:cytosol"/>
    <property type="evidence" value="ECO:0007669"/>
    <property type="project" value="TreeGrafter"/>
</dbReference>
<dbReference type="GO" id="GO:0004477">
    <property type="term" value="F:methenyltetrahydrofolate cyclohydrolase activity"/>
    <property type="evidence" value="ECO:0007669"/>
    <property type="project" value="UniProtKB-UniRule"/>
</dbReference>
<dbReference type="GO" id="GO:0004488">
    <property type="term" value="F:methylenetetrahydrofolate dehydrogenase (NADP+) activity"/>
    <property type="evidence" value="ECO:0007669"/>
    <property type="project" value="UniProtKB-UniRule"/>
</dbReference>
<dbReference type="GO" id="GO:0000105">
    <property type="term" value="P:L-histidine biosynthetic process"/>
    <property type="evidence" value="ECO:0007669"/>
    <property type="project" value="UniProtKB-KW"/>
</dbReference>
<dbReference type="GO" id="GO:0009086">
    <property type="term" value="P:methionine biosynthetic process"/>
    <property type="evidence" value="ECO:0007669"/>
    <property type="project" value="UniProtKB-KW"/>
</dbReference>
<dbReference type="GO" id="GO:0006164">
    <property type="term" value="P:purine nucleotide biosynthetic process"/>
    <property type="evidence" value="ECO:0007669"/>
    <property type="project" value="UniProtKB-KW"/>
</dbReference>
<dbReference type="GO" id="GO:0035999">
    <property type="term" value="P:tetrahydrofolate interconversion"/>
    <property type="evidence" value="ECO:0007669"/>
    <property type="project" value="UniProtKB-UniRule"/>
</dbReference>
<dbReference type="CDD" id="cd01080">
    <property type="entry name" value="NAD_bind_m-THF_DH_Cyclohyd"/>
    <property type="match status" value="1"/>
</dbReference>
<dbReference type="FunFam" id="3.40.50.10860:FF:000001">
    <property type="entry name" value="Bifunctional protein FolD"/>
    <property type="match status" value="1"/>
</dbReference>
<dbReference type="FunFam" id="3.40.50.720:FF:000006">
    <property type="entry name" value="Bifunctional protein FolD"/>
    <property type="match status" value="1"/>
</dbReference>
<dbReference type="Gene3D" id="3.40.50.10860">
    <property type="entry name" value="Leucine Dehydrogenase, chain A, domain 1"/>
    <property type="match status" value="1"/>
</dbReference>
<dbReference type="Gene3D" id="3.40.50.720">
    <property type="entry name" value="NAD(P)-binding Rossmann-like Domain"/>
    <property type="match status" value="1"/>
</dbReference>
<dbReference type="HAMAP" id="MF_01576">
    <property type="entry name" value="THF_DHG_CYH"/>
    <property type="match status" value="1"/>
</dbReference>
<dbReference type="InterPro" id="IPR046346">
    <property type="entry name" value="Aminoacid_DH-like_N_sf"/>
</dbReference>
<dbReference type="InterPro" id="IPR036291">
    <property type="entry name" value="NAD(P)-bd_dom_sf"/>
</dbReference>
<dbReference type="InterPro" id="IPR000672">
    <property type="entry name" value="THF_DH/CycHdrlase"/>
</dbReference>
<dbReference type="InterPro" id="IPR020630">
    <property type="entry name" value="THF_DH/CycHdrlase_cat_dom"/>
</dbReference>
<dbReference type="InterPro" id="IPR020867">
    <property type="entry name" value="THF_DH/CycHdrlase_CS"/>
</dbReference>
<dbReference type="InterPro" id="IPR020631">
    <property type="entry name" value="THF_DH/CycHdrlase_NAD-bd_dom"/>
</dbReference>
<dbReference type="NCBIfam" id="NF008058">
    <property type="entry name" value="PRK10792.1"/>
    <property type="match status" value="1"/>
</dbReference>
<dbReference type="NCBIfam" id="NF010783">
    <property type="entry name" value="PRK14186.1"/>
    <property type="match status" value="1"/>
</dbReference>
<dbReference type="PANTHER" id="PTHR48099:SF5">
    <property type="entry name" value="C-1-TETRAHYDROFOLATE SYNTHASE, CYTOPLASMIC"/>
    <property type="match status" value="1"/>
</dbReference>
<dbReference type="PANTHER" id="PTHR48099">
    <property type="entry name" value="C-1-TETRAHYDROFOLATE SYNTHASE, CYTOPLASMIC-RELATED"/>
    <property type="match status" value="1"/>
</dbReference>
<dbReference type="Pfam" id="PF00763">
    <property type="entry name" value="THF_DHG_CYH"/>
    <property type="match status" value="1"/>
</dbReference>
<dbReference type="Pfam" id="PF02882">
    <property type="entry name" value="THF_DHG_CYH_C"/>
    <property type="match status" value="1"/>
</dbReference>
<dbReference type="PRINTS" id="PR00085">
    <property type="entry name" value="THFDHDRGNASE"/>
</dbReference>
<dbReference type="SUPFAM" id="SSF53223">
    <property type="entry name" value="Aminoacid dehydrogenase-like, N-terminal domain"/>
    <property type="match status" value="1"/>
</dbReference>
<dbReference type="SUPFAM" id="SSF51735">
    <property type="entry name" value="NAD(P)-binding Rossmann-fold domains"/>
    <property type="match status" value="1"/>
</dbReference>
<dbReference type="PROSITE" id="PS00766">
    <property type="entry name" value="THF_DHG_CYH_1"/>
    <property type="match status" value="1"/>
</dbReference>
<dbReference type="PROSITE" id="PS00767">
    <property type="entry name" value="THF_DHG_CYH_2"/>
    <property type="match status" value="1"/>
</dbReference>
<accession>B8F605</accession>
<evidence type="ECO:0000255" key="1">
    <source>
        <dbReference type="HAMAP-Rule" id="MF_01576"/>
    </source>
</evidence>
<feature type="chain" id="PRO_1000185615" description="Bifunctional protein FolD">
    <location>
        <begin position="1"/>
        <end position="284"/>
    </location>
</feature>
<feature type="binding site" evidence="1">
    <location>
        <begin position="166"/>
        <end position="168"/>
    </location>
    <ligand>
        <name>NADP(+)</name>
        <dbReference type="ChEBI" id="CHEBI:58349"/>
    </ligand>
</feature>
<feature type="binding site" evidence="1">
    <location>
        <position position="232"/>
    </location>
    <ligand>
        <name>NADP(+)</name>
        <dbReference type="ChEBI" id="CHEBI:58349"/>
    </ligand>
</feature>
<sequence length="284" mass="30833">MSAQIISGNKLAQQIKTQIFEHIASYVQQGYRAPGLAVILVGSDPASQVYVGSKRKTCAELGIYSESYDLPADTTETQLLSLINKLNNDEKIDGILVQLPLPEHVDTTKIIEAISPDKDVDGFHPYNVGRLCQRIPTLRACTPYGVMKLLETTGENLYGKHAVIVGASNIVGRPMALELLLGGCTVTITHRFTKNLENHVRQADLLVVAVGQPNLIPGEWIKENAIVIDVGINRIGGKLVGDVEYEAASQKAKFITPVPGGVGPMTVAMLMQNTLLAYQRHINP</sequence>
<name>FOLD_GLAP5</name>
<comment type="function">
    <text evidence="1">Catalyzes the oxidation of 5,10-methylenetetrahydrofolate to 5,10-methenyltetrahydrofolate and then the hydrolysis of 5,10-methenyltetrahydrofolate to 10-formyltetrahydrofolate.</text>
</comment>
<comment type="catalytic activity">
    <reaction evidence="1">
        <text>(6R)-5,10-methylene-5,6,7,8-tetrahydrofolate + NADP(+) = (6R)-5,10-methenyltetrahydrofolate + NADPH</text>
        <dbReference type="Rhea" id="RHEA:22812"/>
        <dbReference type="ChEBI" id="CHEBI:15636"/>
        <dbReference type="ChEBI" id="CHEBI:57455"/>
        <dbReference type="ChEBI" id="CHEBI:57783"/>
        <dbReference type="ChEBI" id="CHEBI:58349"/>
        <dbReference type="EC" id="1.5.1.5"/>
    </reaction>
</comment>
<comment type="catalytic activity">
    <reaction evidence="1">
        <text>(6R)-5,10-methenyltetrahydrofolate + H2O = (6R)-10-formyltetrahydrofolate + H(+)</text>
        <dbReference type="Rhea" id="RHEA:23700"/>
        <dbReference type="ChEBI" id="CHEBI:15377"/>
        <dbReference type="ChEBI" id="CHEBI:15378"/>
        <dbReference type="ChEBI" id="CHEBI:57455"/>
        <dbReference type="ChEBI" id="CHEBI:195366"/>
        <dbReference type="EC" id="3.5.4.9"/>
    </reaction>
</comment>
<comment type="pathway">
    <text evidence="1">One-carbon metabolism; tetrahydrofolate interconversion.</text>
</comment>
<comment type="subunit">
    <text evidence="1">Homodimer.</text>
</comment>
<comment type="similarity">
    <text evidence="1">Belongs to the tetrahydrofolate dehydrogenase/cyclohydrolase family.</text>
</comment>
<reference key="1">
    <citation type="journal article" date="2009" name="J. Bacteriol.">
        <title>Complete genome sequence of Haemophilus parasuis SH0165.</title>
        <authorList>
            <person name="Yue M."/>
            <person name="Yang F."/>
            <person name="Yang J."/>
            <person name="Bei W."/>
            <person name="Cai X."/>
            <person name="Chen L."/>
            <person name="Dong J."/>
            <person name="Zhou R."/>
            <person name="Jin M."/>
            <person name="Jin Q."/>
            <person name="Chen H."/>
        </authorList>
    </citation>
    <scope>NUCLEOTIDE SEQUENCE [LARGE SCALE GENOMIC DNA]</scope>
    <source>
        <strain>SH0165</strain>
    </source>
</reference>
<organism>
    <name type="scientific">Glaesserella parasuis serovar 5 (strain SH0165)</name>
    <name type="common">Haemophilus parasuis</name>
    <dbReference type="NCBI Taxonomy" id="557723"/>
    <lineage>
        <taxon>Bacteria</taxon>
        <taxon>Pseudomonadati</taxon>
        <taxon>Pseudomonadota</taxon>
        <taxon>Gammaproteobacteria</taxon>
        <taxon>Pasteurellales</taxon>
        <taxon>Pasteurellaceae</taxon>
        <taxon>Glaesserella</taxon>
    </lineage>
</organism>
<proteinExistence type="inferred from homology"/>